<feature type="chain" id="PRO_0000335489" description="Translation initiation factor IF-2">
    <location>
        <begin position="1"/>
        <end position="949"/>
    </location>
</feature>
<feature type="domain" description="tr-type G">
    <location>
        <begin position="445"/>
        <end position="619"/>
    </location>
</feature>
<feature type="region of interest" description="Disordered" evidence="3">
    <location>
        <begin position="54"/>
        <end position="183"/>
    </location>
</feature>
<feature type="region of interest" description="Disordered" evidence="3">
    <location>
        <begin position="217"/>
        <end position="288"/>
    </location>
</feature>
<feature type="region of interest" description="Disordered" evidence="3">
    <location>
        <begin position="305"/>
        <end position="357"/>
    </location>
</feature>
<feature type="region of interest" description="G1" evidence="1">
    <location>
        <begin position="454"/>
        <end position="461"/>
    </location>
</feature>
<feature type="region of interest" description="G2" evidence="1">
    <location>
        <begin position="479"/>
        <end position="483"/>
    </location>
</feature>
<feature type="region of interest" description="G3" evidence="1">
    <location>
        <begin position="501"/>
        <end position="504"/>
    </location>
</feature>
<feature type="region of interest" description="G4" evidence="1">
    <location>
        <begin position="555"/>
        <end position="558"/>
    </location>
</feature>
<feature type="region of interest" description="G5" evidence="1">
    <location>
        <begin position="591"/>
        <end position="593"/>
    </location>
</feature>
<feature type="compositionally biased region" description="Basic and acidic residues" evidence="3">
    <location>
        <begin position="67"/>
        <end position="92"/>
    </location>
</feature>
<feature type="compositionally biased region" description="Basic and acidic residues" evidence="3">
    <location>
        <begin position="101"/>
        <end position="164"/>
    </location>
</feature>
<feature type="compositionally biased region" description="Low complexity" evidence="3">
    <location>
        <begin position="165"/>
        <end position="183"/>
    </location>
</feature>
<feature type="compositionally biased region" description="Low complexity" evidence="3">
    <location>
        <begin position="217"/>
        <end position="228"/>
    </location>
</feature>
<feature type="compositionally biased region" description="Basic and acidic residues" evidence="3">
    <location>
        <begin position="235"/>
        <end position="288"/>
    </location>
</feature>
<feature type="compositionally biased region" description="Basic and acidic residues" evidence="3">
    <location>
        <begin position="330"/>
        <end position="339"/>
    </location>
</feature>
<feature type="binding site" evidence="2">
    <location>
        <begin position="454"/>
        <end position="461"/>
    </location>
    <ligand>
        <name>GTP</name>
        <dbReference type="ChEBI" id="CHEBI:37565"/>
    </ligand>
</feature>
<feature type="binding site" evidence="2">
    <location>
        <begin position="501"/>
        <end position="505"/>
    </location>
    <ligand>
        <name>GTP</name>
        <dbReference type="ChEBI" id="CHEBI:37565"/>
    </ligand>
</feature>
<feature type="binding site" evidence="2">
    <location>
        <begin position="555"/>
        <end position="558"/>
    </location>
    <ligand>
        <name>GTP</name>
        <dbReference type="ChEBI" id="CHEBI:37565"/>
    </ligand>
</feature>
<reference key="1">
    <citation type="journal article" date="2009" name="Appl. Environ. Microbiol.">
        <title>Complete genome sequence of the chemolithoautotrophic marine magnetotactic coccus strain MC-1.</title>
        <authorList>
            <person name="Schubbe S."/>
            <person name="Williams T.J."/>
            <person name="Xie G."/>
            <person name="Kiss H.E."/>
            <person name="Brettin T.S."/>
            <person name="Martinez D."/>
            <person name="Ross C.A."/>
            <person name="Schuler D."/>
            <person name="Cox B.L."/>
            <person name="Nealson K.H."/>
            <person name="Bazylinski D.A."/>
        </authorList>
    </citation>
    <scope>NUCLEOTIDE SEQUENCE [LARGE SCALE GENOMIC DNA]</scope>
    <source>
        <strain>ATCC BAA-1437 / JCM 17883 / MC-1</strain>
    </source>
</reference>
<dbReference type="EMBL" id="CP000471">
    <property type="protein sequence ID" value="ABK46212.1"/>
    <property type="molecule type" value="Genomic_DNA"/>
</dbReference>
<dbReference type="RefSeq" id="WP_011715264.1">
    <property type="nucleotide sequence ID" value="NC_008576.1"/>
</dbReference>
<dbReference type="SMR" id="A0LE19"/>
<dbReference type="STRING" id="156889.Mmc1_3727"/>
<dbReference type="KEGG" id="mgm:Mmc1_3727"/>
<dbReference type="eggNOG" id="COG0532">
    <property type="taxonomic scope" value="Bacteria"/>
</dbReference>
<dbReference type="HOGENOM" id="CLU_006301_10_1_5"/>
<dbReference type="OrthoDB" id="9811804at2"/>
<dbReference type="Proteomes" id="UP000002586">
    <property type="component" value="Chromosome"/>
</dbReference>
<dbReference type="GO" id="GO:0005829">
    <property type="term" value="C:cytosol"/>
    <property type="evidence" value="ECO:0007669"/>
    <property type="project" value="TreeGrafter"/>
</dbReference>
<dbReference type="GO" id="GO:0005525">
    <property type="term" value="F:GTP binding"/>
    <property type="evidence" value="ECO:0007669"/>
    <property type="project" value="UniProtKB-KW"/>
</dbReference>
<dbReference type="GO" id="GO:0003924">
    <property type="term" value="F:GTPase activity"/>
    <property type="evidence" value="ECO:0007669"/>
    <property type="project" value="UniProtKB-UniRule"/>
</dbReference>
<dbReference type="GO" id="GO:0003743">
    <property type="term" value="F:translation initiation factor activity"/>
    <property type="evidence" value="ECO:0007669"/>
    <property type="project" value="UniProtKB-UniRule"/>
</dbReference>
<dbReference type="CDD" id="cd01887">
    <property type="entry name" value="IF2_eIF5B"/>
    <property type="match status" value="1"/>
</dbReference>
<dbReference type="CDD" id="cd03702">
    <property type="entry name" value="IF2_mtIF2_II"/>
    <property type="match status" value="1"/>
</dbReference>
<dbReference type="CDD" id="cd03692">
    <property type="entry name" value="mtIF2_IVc"/>
    <property type="match status" value="1"/>
</dbReference>
<dbReference type="FunFam" id="2.40.30.10:FF:000007">
    <property type="entry name" value="Translation initiation factor IF-2"/>
    <property type="match status" value="1"/>
</dbReference>
<dbReference type="FunFam" id="2.40.30.10:FF:000008">
    <property type="entry name" value="Translation initiation factor IF-2"/>
    <property type="match status" value="1"/>
</dbReference>
<dbReference type="FunFam" id="3.40.50.10050:FF:000001">
    <property type="entry name" value="Translation initiation factor IF-2"/>
    <property type="match status" value="1"/>
</dbReference>
<dbReference type="FunFam" id="3.40.50.300:FF:000019">
    <property type="entry name" value="Translation initiation factor IF-2"/>
    <property type="match status" value="1"/>
</dbReference>
<dbReference type="Gene3D" id="3.40.50.300">
    <property type="entry name" value="P-loop containing nucleotide triphosphate hydrolases"/>
    <property type="match status" value="1"/>
</dbReference>
<dbReference type="Gene3D" id="2.40.30.10">
    <property type="entry name" value="Translation factors"/>
    <property type="match status" value="2"/>
</dbReference>
<dbReference type="Gene3D" id="3.40.50.10050">
    <property type="entry name" value="Translation initiation factor IF- 2, domain 3"/>
    <property type="match status" value="1"/>
</dbReference>
<dbReference type="HAMAP" id="MF_00100_B">
    <property type="entry name" value="IF_2_B"/>
    <property type="match status" value="1"/>
</dbReference>
<dbReference type="InterPro" id="IPR053905">
    <property type="entry name" value="EF-G-like_DII"/>
</dbReference>
<dbReference type="InterPro" id="IPR013575">
    <property type="entry name" value="IF2_assoc_dom_bac"/>
</dbReference>
<dbReference type="InterPro" id="IPR044145">
    <property type="entry name" value="IF2_II"/>
</dbReference>
<dbReference type="InterPro" id="IPR006847">
    <property type="entry name" value="IF2_N"/>
</dbReference>
<dbReference type="InterPro" id="IPR027417">
    <property type="entry name" value="P-loop_NTPase"/>
</dbReference>
<dbReference type="InterPro" id="IPR005225">
    <property type="entry name" value="Small_GTP-bd"/>
</dbReference>
<dbReference type="InterPro" id="IPR000795">
    <property type="entry name" value="T_Tr_GTP-bd_dom"/>
</dbReference>
<dbReference type="InterPro" id="IPR000178">
    <property type="entry name" value="TF_IF2_bacterial-like"/>
</dbReference>
<dbReference type="InterPro" id="IPR015760">
    <property type="entry name" value="TIF_IF2"/>
</dbReference>
<dbReference type="InterPro" id="IPR023115">
    <property type="entry name" value="TIF_IF2_dom3"/>
</dbReference>
<dbReference type="InterPro" id="IPR036925">
    <property type="entry name" value="TIF_IF2_dom3_sf"/>
</dbReference>
<dbReference type="InterPro" id="IPR009000">
    <property type="entry name" value="Transl_B-barrel_sf"/>
</dbReference>
<dbReference type="NCBIfam" id="TIGR00487">
    <property type="entry name" value="IF-2"/>
    <property type="match status" value="1"/>
</dbReference>
<dbReference type="NCBIfam" id="TIGR00231">
    <property type="entry name" value="small_GTP"/>
    <property type="match status" value="1"/>
</dbReference>
<dbReference type="PANTHER" id="PTHR43381:SF5">
    <property type="entry name" value="TR-TYPE G DOMAIN-CONTAINING PROTEIN"/>
    <property type="match status" value="1"/>
</dbReference>
<dbReference type="PANTHER" id="PTHR43381">
    <property type="entry name" value="TRANSLATION INITIATION FACTOR IF-2-RELATED"/>
    <property type="match status" value="1"/>
</dbReference>
<dbReference type="Pfam" id="PF22042">
    <property type="entry name" value="EF-G_D2"/>
    <property type="match status" value="1"/>
</dbReference>
<dbReference type="Pfam" id="PF00009">
    <property type="entry name" value="GTP_EFTU"/>
    <property type="match status" value="1"/>
</dbReference>
<dbReference type="Pfam" id="PF11987">
    <property type="entry name" value="IF-2"/>
    <property type="match status" value="1"/>
</dbReference>
<dbReference type="Pfam" id="PF08364">
    <property type="entry name" value="IF2_assoc"/>
    <property type="match status" value="1"/>
</dbReference>
<dbReference type="Pfam" id="PF04760">
    <property type="entry name" value="IF2_N"/>
    <property type="match status" value="1"/>
</dbReference>
<dbReference type="SUPFAM" id="SSF52156">
    <property type="entry name" value="Initiation factor IF2/eIF5b, domain 3"/>
    <property type="match status" value="1"/>
</dbReference>
<dbReference type="SUPFAM" id="SSF52540">
    <property type="entry name" value="P-loop containing nucleoside triphosphate hydrolases"/>
    <property type="match status" value="1"/>
</dbReference>
<dbReference type="SUPFAM" id="SSF50447">
    <property type="entry name" value="Translation proteins"/>
    <property type="match status" value="2"/>
</dbReference>
<dbReference type="PROSITE" id="PS51722">
    <property type="entry name" value="G_TR_2"/>
    <property type="match status" value="1"/>
</dbReference>
<dbReference type="PROSITE" id="PS01176">
    <property type="entry name" value="IF2"/>
    <property type="match status" value="1"/>
</dbReference>
<keyword id="KW-0963">Cytoplasm</keyword>
<keyword id="KW-0342">GTP-binding</keyword>
<keyword id="KW-0396">Initiation factor</keyword>
<keyword id="KW-0547">Nucleotide-binding</keyword>
<keyword id="KW-0648">Protein biosynthesis</keyword>
<keyword id="KW-1185">Reference proteome</keyword>
<organism>
    <name type="scientific">Magnetococcus marinus (strain ATCC BAA-1437 / JCM 17883 / MC-1)</name>
    <dbReference type="NCBI Taxonomy" id="156889"/>
    <lineage>
        <taxon>Bacteria</taxon>
        <taxon>Pseudomonadati</taxon>
        <taxon>Pseudomonadota</taxon>
        <taxon>Alphaproteobacteria</taxon>
        <taxon>Magnetococcales</taxon>
        <taxon>Magnetococcaceae</taxon>
        <taxon>Magnetococcus</taxon>
    </lineage>
</organism>
<sequence length="949" mass="103803">MSDNKPSEGDNKLQLKAPRRIVLKKTVEGSSIKQNFAHGRSKSVAVEVRRKKTFLKPGSKEGGFLIDQEKPEEIEEKKEAPKSPKRGEERHILRPLTPEEIEAKQKELEAKRQAEEEAARQKAEQEAARQKQEAEAARRKAEQEAARQKQEAEAARRKAEEEAARAAAAAPAAPVAAPAEAAPAVPVAVAEPVVVAQPAPEAPAPVVEEEMVEAKPLPAAAPAAPSAPVRLLHQPVEEEPKRKLSKAQREEMARRKTEDLVSKRLNQLEELREQKRKEDARKEAEVALAKKEKPVVAATAAAAAEVVAGRTPREDSAGEPFSAGRRKNKKYQDNEDRLQQPRGKSRRRKPFKSEMQAPAPVYREVTIPETITVGELANRMAVKSSEVIKLLFAQGMLVTINQTLDQDTAVLVVEEMGHKPKSVSESAAIEAELDAGEDAAEDMETRPPVITVMGHVDHGKTSLLDAIRSTDVTSREHGGITQHIGAYQVTLASGDKITFLDTPGHSAFTAMRARGAQVTDIVVLVVAADDGVMPQTVEAINHAKSAKVPIVVAVNKIDKPGSNPDRVMQQLSDHGLVPEAWGGDTIFVHVSAKSGEGISTLEEMLLLQAEMLNLQSNPTKKRARGTIIEANLDRGRGAVATCLVQNGTLRVGDICVVGNEWCRVRALNDDRGNQVSEASPSMPVEIIGLSGVPQAGDDLVAVNDERRAREIAQFRQQKDKEAIQAKQQPATRLEDMFEHIEQGEVEELNVVLKADVQGSVEAVAEALRKIKHEQIEVRVIHTGVGGINESDVMLAVASGAITVGFNVRADAKARDLAKREQIDLRFYNVIYDLVDDISLALEGRLAPTVREKVLGHAQVREVFRITKIGNVCGCLVTDGIIQRNGKLRILRQNVVVYEGPVSALKRFKDDVKEVREGFECGISIEKFNDVKVDDVLECYVEEQVKQTLS</sequence>
<comment type="function">
    <text evidence="2">One of the essential components for the initiation of protein synthesis. Protects formylmethionyl-tRNA from spontaneous hydrolysis and promotes its binding to the 30S ribosomal subunits. Also involved in the hydrolysis of GTP during the formation of the 70S ribosomal complex.</text>
</comment>
<comment type="subcellular location">
    <subcellularLocation>
        <location evidence="2">Cytoplasm</location>
    </subcellularLocation>
</comment>
<comment type="similarity">
    <text evidence="2">Belongs to the TRAFAC class translation factor GTPase superfamily. Classic translation factor GTPase family. IF-2 subfamily.</text>
</comment>
<protein>
    <recommendedName>
        <fullName evidence="2">Translation initiation factor IF-2</fullName>
    </recommendedName>
</protein>
<accession>A0LE19</accession>
<proteinExistence type="inferred from homology"/>
<evidence type="ECO:0000250" key="1"/>
<evidence type="ECO:0000255" key="2">
    <source>
        <dbReference type="HAMAP-Rule" id="MF_00100"/>
    </source>
</evidence>
<evidence type="ECO:0000256" key="3">
    <source>
        <dbReference type="SAM" id="MobiDB-lite"/>
    </source>
</evidence>
<gene>
    <name evidence="2" type="primary">infB</name>
    <name type="ordered locus">Mmc1_3727</name>
</gene>
<name>IF2_MAGMM</name>